<accession>Q93HX6</accession>
<reference key="1">
    <citation type="journal article" date="2003" name="Biochim. Biophys. Acta">
        <title>The D-glucosaminate dehydratase alpha-subunit from Pseudomonas fluorescens exhibits thioredoxin reductase activity.</title>
        <authorList>
            <person name="Iwamoto R."/>
            <person name="Amano C."/>
            <person name="Ikehara K."/>
            <person name="Ushida N."/>
        </authorList>
    </citation>
    <scope>NUCLEOTIDE SEQUENCE [GENOMIC DNA]</scope>
    <scope>PROTEIN SEQUENCE OF 119-131; 225-234; 259-282 AND 311-320</scope>
    <scope>FUNCTION</scope>
    <scope>CATALYTIC ACTIVITY</scope>
    <scope>BIOPHYSICOCHEMICAL PROPERTIES</scope>
</reference>
<organism>
    <name type="scientific">Pseudomonas fluorescens</name>
    <dbReference type="NCBI Taxonomy" id="294"/>
    <lineage>
        <taxon>Bacteria</taxon>
        <taxon>Pseudomonadati</taxon>
        <taxon>Pseudomonadota</taxon>
        <taxon>Gammaproteobacteria</taxon>
        <taxon>Pseudomonadales</taxon>
        <taxon>Pseudomonadaceae</taxon>
        <taxon>Pseudomonas</taxon>
    </lineage>
</organism>
<name>GLCAL_PSEFL</name>
<dbReference type="EC" id="4.3.1.9" evidence="2"/>
<dbReference type="EMBL" id="AB053183">
    <property type="protein sequence ID" value="BAB64360.1"/>
    <property type="status" value="ALT_SEQ"/>
    <property type="molecule type" value="Genomic_DNA"/>
</dbReference>
<dbReference type="SMR" id="Q93HX6"/>
<dbReference type="eggNOG" id="COG0492">
    <property type="taxonomic scope" value="Bacteria"/>
</dbReference>
<dbReference type="BRENDA" id="4.3.1.9">
    <property type="organism ID" value="5121"/>
</dbReference>
<dbReference type="SABIO-RK" id="Q93HX6"/>
<dbReference type="GO" id="GO:0005737">
    <property type="term" value="C:cytoplasm"/>
    <property type="evidence" value="ECO:0007669"/>
    <property type="project" value="InterPro"/>
</dbReference>
<dbReference type="GO" id="GO:0047930">
    <property type="term" value="F:glucosaminate ammonia-lyase activity"/>
    <property type="evidence" value="ECO:0007669"/>
    <property type="project" value="UniProtKB-EC"/>
</dbReference>
<dbReference type="GO" id="GO:0004791">
    <property type="term" value="F:thioredoxin-disulfide reductase (NADPH) activity"/>
    <property type="evidence" value="ECO:0007669"/>
    <property type="project" value="InterPro"/>
</dbReference>
<dbReference type="GO" id="GO:0019430">
    <property type="term" value="P:removal of superoxide radicals"/>
    <property type="evidence" value="ECO:0007669"/>
    <property type="project" value="InterPro"/>
</dbReference>
<dbReference type="Gene3D" id="3.50.50.60">
    <property type="entry name" value="FAD/NAD(P)-binding domain"/>
    <property type="match status" value="2"/>
</dbReference>
<dbReference type="InterPro" id="IPR036188">
    <property type="entry name" value="FAD/NAD-bd_sf"/>
</dbReference>
<dbReference type="InterPro" id="IPR023753">
    <property type="entry name" value="FAD/NAD-binding_dom"/>
</dbReference>
<dbReference type="InterPro" id="IPR050097">
    <property type="entry name" value="Ferredoxin-NADP_redctase_2"/>
</dbReference>
<dbReference type="InterPro" id="IPR008255">
    <property type="entry name" value="Pyr_nucl-diS_OxRdtase_2_AS"/>
</dbReference>
<dbReference type="InterPro" id="IPR005982">
    <property type="entry name" value="Thioredox_Rdtase"/>
</dbReference>
<dbReference type="NCBIfam" id="TIGR01292">
    <property type="entry name" value="TRX_reduct"/>
    <property type="match status" value="1"/>
</dbReference>
<dbReference type="PANTHER" id="PTHR48105">
    <property type="entry name" value="THIOREDOXIN REDUCTASE 1-RELATED-RELATED"/>
    <property type="match status" value="1"/>
</dbReference>
<dbReference type="Pfam" id="PF07992">
    <property type="entry name" value="Pyr_redox_2"/>
    <property type="match status" value="1"/>
</dbReference>
<dbReference type="PRINTS" id="PR00368">
    <property type="entry name" value="FADPNR"/>
</dbReference>
<dbReference type="PRINTS" id="PR00469">
    <property type="entry name" value="PNDRDTASEII"/>
</dbReference>
<dbReference type="SUPFAM" id="SSF51905">
    <property type="entry name" value="FAD/NAD(P)-binding domain"/>
    <property type="match status" value="1"/>
</dbReference>
<dbReference type="PROSITE" id="PS00573">
    <property type="entry name" value="PYRIDINE_REDOX_2"/>
    <property type="match status" value="1"/>
</dbReference>
<proteinExistence type="evidence at protein level"/>
<evidence type="ECO:0000250" key="1"/>
<evidence type="ECO:0000269" key="2">
    <source>
    </source>
</evidence>
<evidence type="ECO:0000305" key="3"/>
<protein>
    <recommendedName>
        <fullName>Glucosaminate ammonia-lyase</fullName>
        <ecNumber evidence="2">4.3.1.9</ecNumber>
    </recommendedName>
    <alternativeName>
        <fullName>D-glucosaminate dehydratase alpha-subunit</fullName>
    </alternativeName>
    <alternativeName>
        <fullName>GlcNA-DH alpha subunit</fullName>
        <shortName>GlcNADH-alpha</shortName>
    </alternativeName>
</protein>
<sequence>MVEVRHSRVIILGSGPAGYSAAVYAARANLKPLLITGMQAGGQLTTTTEVDNWPGDVHGLTGPALMERMREHAERFETEIVFDHINAVDFAAKPYTLTGDSATYTCDALIIATGASARYLGLPSEEAFMGKGVSACATCDGFFYRNKPVAVVGGGNTAVEEALYLANIASTVTLIHRRETFRAEKILIDKLNARVAEGKIILKLNANLDEVLGDNMGVTGARLKNNDGSFDELKVDGVFIAIGHTPNTSLFEGQLTLKDGYLVVQGGRDGNATATSVEGIFAAGDVADHVYRQAITSAGAGCMAALDTERYLDGLQNASE</sequence>
<keyword id="KW-0903">Direct protein sequencing</keyword>
<keyword id="KW-1015">Disulfide bond</keyword>
<keyword id="KW-0274">FAD</keyword>
<keyword id="KW-0285">Flavoprotein</keyword>
<keyword id="KW-0456">Lyase</keyword>
<keyword id="KW-0560">Oxidoreductase</keyword>
<keyword id="KW-0676">Redox-active center</keyword>
<feature type="chain" id="PRO_0000419105" description="Glucosaminate ammonia-lyase">
    <location>
        <begin position="1"/>
        <end position="320"/>
    </location>
</feature>
<feature type="binding site" evidence="1">
    <location>
        <begin position="36"/>
        <end position="43"/>
    </location>
    <ligand>
        <name>FAD</name>
        <dbReference type="ChEBI" id="CHEBI:57692"/>
    </ligand>
</feature>
<feature type="binding site" evidence="1">
    <location>
        <begin position="285"/>
        <end position="294"/>
    </location>
    <ligand>
        <name>FAD</name>
        <dbReference type="ChEBI" id="CHEBI:57692"/>
    </ligand>
</feature>
<feature type="disulfide bond" description="Redox-active" evidence="1">
    <location>
        <begin position="136"/>
        <end position="139"/>
    </location>
</feature>
<comment type="function">
    <text evidence="2">Catalyzes the conversion of 2-amino-2-deoxy-D-gluconate (GlcNA) to 2-keto-3-deoxy-D-gluconic acid (KDGA) and ammonia.</text>
</comment>
<comment type="catalytic activity">
    <reaction evidence="2">
        <text>2-amino-2-deoxy-D-gluconate = 2-dehydro-3-deoxy-D-gluconate + NH4(+)</text>
        <dbReference type="Rhea" id="RHEA:12488"/>
        <dbReference type="ChEBI" id="CHEBI:28938"/>
        <dbReference type="ChEBI" id="CHEBI:57990"/>
        <dbReference type="ChEBI" id="CHEBI:58269"/>
        <dbReference type="EC" id="4.3.1.9"/>
    </reaction>
</comment>
<comment type="biophysicochemical properties">
    <kinetics>
        <KM evidence="2">4.4 uM for Thioredoxin</KM>
        <KM evidence="2">11.3 uM for NADPH</KM>
    </kinetics>
</comment>
<comment type="miscellaneous">
    <text evidence="1">The active site is a redox-active disulfide bond.</text>
</comment>
<comment type="similarity">
    <text evidence="3">Belongs to the class-II pyridine nucleotide-disulfide oxidoreductase family.</text>
</comment>
<comment type="sequence caution" evidence="3">
    <conflict type="erroneous termination">
        <sequence resource="EMBL-CDS" id="BAB64360"/>
    </conflict>
    <text>Extended C-terminus.</text>
</comment>
<comment type="sequence caution" evidence="3">
    <conflict type="miscellaneous discrepancy">
        <sequence resource="EMBL-CDS" id="BAB64360"/>
    </conflict>
    <text>The sequence does not correspond to the one published in PubMed:12686150.</text>
</comment>